<sequence length="268" mass="28808">MSRFETQFATLNAKNEGAFVPFVTLCDPTFDRSFEIICTLVDNGADALELGFPFSDPLLDGPVIQAANNRALTAGHSSEDSFKLLEKVRSKYPEIPISLLLCANLIFAKGLDAFYQRCAEVGVDAVLVADIPLLAKEDYVQAAKKHGIQPVFICPPNADEKTIQGVAENSEGYTYLVSRAGVTSAENQAHAANLDTLVEQLKAHNAPPILQGFGIAQPEQVKEALSLGTAGAISGSATVKIIERNLDNHEQCLAELAEFVQTMKAATK</sequence>
<proteinExistence type="inferred from homology"/>
<protein>
    <recommendedName>
        <fullName evidence="1">Tryptophan synthase alpha chain</fullName>
        <ecNumber evidence="1">4.2.1.20</ecNumber>
    </recommendedName>
</protein>
<name>TRPA_HAEIG</name>
<comment type="function">
    <text evidence="1">The alpha subunit is responsible for the aldol cleavage of indoleglycerol phosphate to indole and glyceraldehyde 3-phosphate.</text>
</comment>
<comment type="catalytic activity">
    <reaction evidence="1">
        <text>(1S,2R)-1-C-(indol-3-yl)glycerol 3-phosphate + L-serine = D-glyceraldehyde 3-phosphate + L-tryptophan + H2O</text>
        <dbReference type="Rhea" id="RHEA:10532"/>
        <dbReference type="ChEBI" id="CHEBI:15377"/>
        <dbReference type="ChEBI" id="CHEBI:33384"/>
        <dbReference type="ChEBI" id="CHEBI:57912"/>
        <dbReference type="ChEBI" id="CHEBI:58866"/>
        <dbReference type="ChEBI" id="CHEBI:59776"/>
        <dbReference type="EC" id="4.2.1.20"/>
    </reaction>
</comment>
<comment type="pathway">
    <text evidence="1">Amino-acid biosynthesis; L-tryptophan biosynthesis; L-tryptophan from chorismate: step 5/5.</text>
</comment>
<comment type="subunit">
    <text evidence="1">Tetramer of two alpha and two beta chains.</text>
</comment>
<comment type="similarity">
    <text evidence="1">Belongs to the TrpA family.</text>
</comment>
<feature type="chain" id="PRO_1000018213" description="Tryptophan synthase alpha chain">
    <location>
        <begin position="1"/>
        <end position="268"/>
    </location>
</feature>
<feature type="active site" description="Proton acceptor" evidence="1">
    <location>
        <position position="49"/>
    </location>
</feature>
<feature type="active site" description="Proton acceptor" evidence="1">
    <location>
        <position position="60"/>
    </location>
</feature>
<keyword id="KW-0028">Amino-acid biosynthesis</keyword>
<keyword id="KW-0057">Aromatic amino acid biosynthesis</keyword>
<keyword id="KW-0456">Lyase</keyword>
<keyword id="KW-0822">Tryptophan biosynthesis</keyword>
<gene>
    <name evidence="1" type="primary">trpA</name>
    <name type="ordered locus">CGSHiGG_01030</name>
</gene>
<reference key="1">
    <citation type="journal article" date="2007" name="Genome Biol.">
        <title>Characterization and modeling of the Haemophilus influenzae core and supragenomes based on the complete genomic sequences of Rd and 12 clinical nontypeable strains.</title>
        <authorList>
            <person name="Hogg J.S."/>
            <person name="Hu F.Z."/>
            <person name="Janto B."/>
            <person name="Boissy R."/>
            <person name="Hayes J."/>
            <person name="Keefe R."/>
            <person name="Post J.C."/>
            <person name="Ehrlich G.D."/>
        </authorList>
    </citation>
    <scope>NUCLEOTIDE SEQUENCE [LARGE SCALE GENOMIC DNA]</scope>
    <source>
        <strain>PittGG</strain>
    </source>
</reference>
<accession>A5UEU6</accession>
<evidence type="ECO:0000255" key="1">
    <source>
        <dbReference type="HAMAP-Rule" id="MF_00131"/>
    </source>
</evidence>
<dbReference type="EC" id="4.2.1.20" evidence="1"/>
<dbReference type="EMBL" id="CP000672">
    <property type="protein sequence ID" value="ABQ99301.1"/>
    <property type="molecule type" value="Genomic_DNA"/>
</dbReference>
<dbReference type="SMR" id="A5UEU6"/>
<dbReference type="KEGG" id="hiq:CGSHiGG_01030"/>
<dbReference type="HOGENOM" id="CLU_016734_0_4_6"/>
<dbReference type="UniPathway" id="UPA00035">
    <property type="reaction ID" value="UER00044"/>
</dbReference>
<dbReference type="Proteomes" id="UP000001990">
    <property type="component" value="Chromosome"/>
</dbReference>
<dbReference type="GO" id="GO:0005829">
    <property type="term" value="C:cytosol"/>
    <property type="evidence" value="ECO:0007669"/>
    <property type="project" value="TreeGrafter"/>
</dbReference>
<dbReference type="GO" id="GO:0004834">
    <property type="term" value="F:tryptophan synthase activity"/>
    <property type="evidence" value="ECO:0007669"/>
    <property type="project" value="UniProtKB-UniRule"/>
</dbReference>
<dbReference type="CDD" id="cd04724">
    <property type="entry name" value="Tryptophan_synthase_alpha"/>
    <property type="match status" value="1"/>
</dbReference>
<dbReference type="FunFam" id="3.20.20.70:FF:000037">
    <property type="entry name" value="Tryptophan synthase alpha chain"/>
    <property type="match status" value="1"/>
</dbReference>
<dbReference type="Gene3D" id="3.20.20.70">
    <property type="entry name" value="Aldolase class I"/>
    <property type="match status" value="1"/>
</dbReference>
<dbReference type="HAMAP" id="MF_00131">
    <property type="entry name" value="Trp_synth_alpha"/>
    <property type="match status" value="1"/>
</dbReference>
<dbReference type="InterPro" id="IPR013785">
    <property type="entry name" value="Aldolase_TIM"/>
</dbReference>
<dbReference type="InterPro" id="IPR011060">
    <property type="entry name" value="RibuloseP-bd_barrel"/>
</dbReference>
<dbReference type="InterPro" id="IPR018204">
    <property type="entry name" value="Trp_synthase_alpha_AS"/>
</dbReference>
<dbReference type="InterPro" id="IPR002028">
    <property type="entry name" value="Trp_synthase_suA"/>
</dbReference>
<dbReference type="NCBIfam" id="TIGR00262">
    <property type="entry name" value="trpA"/>
    <property type="match status" value="1"/>
</dbReference>
<dbReference type="PANTHER" id="PTHR43406:SF1">
    <property type="entry name" value="TRYPTOPHAN SYNTHASE ALPHA CHAIN, CHLOROPLASTIC"/>
    <property type="match status" value="1"/>
</dbReference>
<dbReference type="PANTHER" id="PTHR43406">
    <property type="entry name" value="TRYPTOPHAN SYNTHASE, ALPHA CHAIN"/>
    <property type="match status" value="1"/>
</dbReference>
<dbReference type="Pfam" id="PF00290">
    <property type="entry name" value="Trp_syntA"/>
    <property type="match status" value="1"/>
</dbReference>
<dbReference type="SUPFAM" id="SSF51366">
    <property type="entry name" value="Ribulose-phoshate binding barrel"/>
    <property type="match status" value="1"/>
</dbReference>
<dbReference type="PROSITE" id="PS00167">
    <property type="entry name" value="TRP_SYNTHASE_ALPHA"/>
    <property type="match status" value="1"/>
</dbReference>
<organism>
    <name type="scientific">Haemophilus influenzae (strain PittGG)</name>
    <dbReference type="NCBI Taxonomy" id="374931"/>
    <lineage>
        <taxon>Bacteria</taxon>
        <taxon>Pseudomonadati</taxon>
        <taxon>Pseudomonadota</taxon>
        <taxon>Gammaproteobacteria</taxon>
        <taxon>Pasteurellales</taxon>
        <taxon>Pasteurellaceae</taxon>
        <taxon>Haemophilus</taxon>
    </lineage>
</organism>